<reference key="1">
    <citation type="journal article" date="2004" name="Genome Res.">
        <title>The status, quality, and expansion of the NIH full-length cDNA project: the Mammalian Gene Collection (MGC).</title>
        <authorList>
            <consortium name="The MGC Project Team"/>
        </authorList>
    </citation>
    <scope>NUCLEOTIDE SEQUENCE [LARGE SCALE MRNA]</scope>
    <source>
        <tissue>Eye</tissue>
    </source>
</reference>
<keyword id="KW-1185">Reference proteome</keyword>
<dbReference type="EMBL" id="BC021251">
    <property type="protein sequence ID" value="AAH21251.1"/>
    <property type="molecule type" value="mRNA"/>
</dbReference>
<dbReference type="CCDS" id="CCDS5890.1"/>
<dbReference type="RefSeq" id="NP_660347.1">
    <property type="nucleotide sequence ID" value="NM_145304.4"/>
</dbReference>
<dbReference type="BioGRID" id="128440">
    <property type="interactions" value="5"/>
</dbReference>
<dbReference type="IntAct" id="Q8WU49">
    <property type="interactions" value="3"/>
</dbReference>
<dbReference type="STRING" id="9606.ENSP00000304071"/>
<dbReference type="GlyGen" id="Q8WU49">
    <property type="glycosylation" value="1 site"/>
</dbReference>
<dbReference type="iPTMnet" id="Q8WU49"/>
<dbReference type="PhosphoSitePlus" id="Q8WU49"/>
<dbReference type="BioMuta" id="C7orf33"/>
<dbReference type="DMDM" id="68565239"/>
<dbReference type="PaxDb" id="9606-ENSP00000304071"/>
<dbReference type="Antibodypedia" id="67906">
    <property type="antibodies" value="21 antibodies from 5 providers"/>
</dbReference>
<dbReference type="DNASU" id="202865"/>
<dbReference type="Ensembl" id="ENST00000307003.3">
    <property type="protein sequence ID" value="ENSP00000304071.2"/>
    <property type="gene ID" value="ENSG00000170279.3"/>
</dbReference>
<dbReference type="GeneID" id="202865"/>
<dbReference type="KEGG" id="hsa:202865"/>
<dbReference type="MANE-Select" id="ENST00000307003.3">
    <property type="protein sequence ID" value="ENSP00000304071.2"/>
    <property type="RefSeq nucleotide sequence ID" value="NM_145304.4"/>
    <property type="RefSeq protein sequence ID" value="NP_660347.1"/>
</dbReference>
<dbReference type="UCSC" id="uc003wew.3">
    <property type="organism name" value="human"/>
</dbReference>
<dbReference type="AGR" id="HGNC:21724"/>
<dbReference type="CTD" id="202865"/>
<dbReference type="DisGeNET" id="202865"/>
<dbReference type="GeneCards" id="C7orf33"/>
<dbReference type="HGNC" id="HGNC:21724">
    <property type="gene designation" value="C7orf33"/>
</dbReference>
<dbReference type="HPA" id="ENSG00000170279">
    <property type="expression patterns" value="Tissue enriched (retina)"/>
</dbReference>
<dbReference type="neXtProt" id="NX_Q8WU49"/>
<dbReference type="OpenTargets" id="ENSG00000170279"/>
<dbReference type="PharmGKB" id="PA134962911"/>
<dbReference type="VEuPathDB" id="HostDB:ENSG00000170279"/>
<dbReference type="eggNOG" id="ENOG502TECW">
    <property type="taxonomic scope" value="Eukaryota"/>
</dbReference>
<dbReference type="GeneTree" id="ENSGT00530000065058"/>
<dbReference type="HOGENOM" id="CLU_129932_0_0_1"/>
<dbReference type="InParanoid" id="Q8WU49"/>
<dbReference type="OMA" id="TVWVHFR"/>
<dbReference type="OrthoDB" id="9480698at2759"/>
<dbReference type="PAN-GO" id="Q8WU49">
    <property type="GO annotations" value="0 GO annotations based on evolutionary models"/>
</dbReference>
<dbReference type="PhylomeDB" id="Q8WU49"/>
<dbReference type="PathwayCommons" id="Q8WU49"/>
<dbReference type="SignaLink" id="Q8WU49"/>
<dbReference type="BioGRID-ORCS" id="202865">
    <property type="hits" value="9 hits in 1130 CRISPR screens"/>
</dbReference>
<dbReference type="GenomeRNAi" id="202865"/>
<dbReference type="Pharos" id="Q8WU49">
    <property type="development level" value="Tdark"/>
</dbReference>
<dbReference type="PRO" id="PR:Q8WU49"/>
<dbReference type="Proteomes" id="UP000005640">
    <property type="component" value="Chromosome 7"/>
</dbReference>
<dbReference type="RNAct" id="Q8WU49">
    <property type="molecule type" value="protein"/>
</dbReference>
<dbReference type="Bgee" id="ENSG00000170279">
    <property type="expression patterns" value="Expressed in male germ line stem cell (sensu Vertebrata) in testis and 3 other cell types or tissues"/>
</dbReference>
<dbReference type="ExpressionAtlas" id="Q8WU49">
    <property type="expression patterns" value="baseline and differential"/>
</dbReference>
<dbReference type="InterPro" id="IPR041287">
    <property type="entry name" value="DUF5548"/>
</dbReference>
<dbReference type="Pfam" id="PF17702">
    <property type="entry name" value="DUF5548"/>
    <property type="match status" value="1"/>
</dbReference>
<protein>
    <recommendedName>
        <fullName>Uncharacterized protein C7orf33</fullName>
    </recommendedName>
</protein>
<accession>Q8WU49</accession>
<organism>
    <name type="scientific">Homo sapiens</name>
    <name type="common">Human</name>
    <dbReference type="NCBI Taxonomy" id="9606"/>
    <lineage>
        <taxon>Eukaryota</taxon>
        <taxon>Metazoa</taxon>
        <taxon>Chordata</taxon>
        <taxon>Craniata</taxon>
        <taxon>Vertebrata</taxon>
        <taxon>Euteleostomi</taxon>
        <taxon>Mammalia</taxon>
        <taxon>Eutheria</taxon>
        <taxon>Euarchontoglires</taxon>
        <taxon>Primates</taxon>
        <taxon>Haplorrhini</taxon>
        <taxon>Catarrhini</taxon>
        <taxon>Hominidae</taxon>
        <taxon>Homo</taxon>
    </lineage>
</organism>
<sequence length="177" mass="19475">MQVEVQSLSLEECPWRLPGPQCECEALLPSGARRRIDLRLSGRAVAVWVHVRGGPGQFNLSYATGRHKKPNPHQNMNRGMEFIAPVSAPTKSGAPWHFLSQGPTDAQRAVRIRPGTRMGLSSDPVVGTLSSSYLDLLTLSYKPGRTVTSSYLNVRGHEVRKLQNSVEATRISRTDSS</sequence>
<proteinExistence type="evidence at transcript level"/>
<feature type="chain" id="PRO_0000089590" description="Uncharacterized protein C7orf33">
    <location>
        <begin position="1"/>
        <end position="177"/>
    </location>
</feature>
<gene>
    <name type="primary">C7orf33</name>
</gene>
<name>CG033_HUMAN</name>